<gene>
    <name evidence="1" type="primary">coq-6</name>
    <name type="ORF">K07B1.2</name>
</gene>
<keyword id="KW-0274">FAD</keyword>
<keyword id="KW-0285">Flavoprotein</keyword>
<keyword id="KW-0472">Membrane</keyword>
<keyword id="KW-0496">Mitochondrion</keyword>
<keyword id="KW-0999">Mitochondrion inner membrane</keyword>
<keyword id="KW-0503">Monooxygenase</keyword>
<keyword id="KW-0560">Oxidoreductase</keyword>
<keyword id="KW-1185">Reference proteome</keyword>
<keyword id="KW-0831">Ubiquinone biosynthesis</keyword>
<organism>
    <name type="scientific">Caenorhabditis elegans</name>
    <dbReference type="NCBI Taxonomy" id="6239"/>
    <lineage>
        <taxon>Eukaryota</taxon>
        <taxon>Metazoa</taxon>
        <taxon>Ecdysozoa</taxon>
        <taxon>Nematoda</taxon>
        <taxon>Chromadorea</taxon>
        <taxon>Rhabditida</taxon>
        <taxon>Rhabditina</taxon>
        <taxon>Rhabditomorpha</taxon>
        <taxon>Rhabditoidea</taxon>
        <taxon>Rhabditidae</taxon>
        <taxon>Peloderinae</taxon>
        <taxon>Caenorhabditis</taxon>
    </lineage>
</organism>
<accession>O01884</accession>
<proteinExistence type="inferred from homology"/>
<sequence>MKLPGGTIICARNASSYYDTVIVGGGMVGNAMACSLGANKSFQSKSVLLLDAGRSPSLASFKPGAPFNNRVVATSPTSIDTFKKLGVWDQINSHRTKKVNRLFVFDSCSTSEIEFERGQQEEVAFIIENDLIVGSLYEKLAEYKNVDVKTGAKVEDCSIPNALENMATIKLENGDVIETSLLIGADGVNSKVRHASNLDYTTFNYNQHGLVAIVNIETANGKNETAWQRFTTLGPVALLPLSDTVSGLTWSTSPEEAQRLKQLPSDQFVDELNSALFSQNNQIPLVNQTIFALNRMNPFRTETFGRKAEGTTPPHVITVQDKSRASFPLGFGNAHSYITTRCALIGDAAHRMHPLAGQGVNLGWSDVQILDKVLGDAVREGADIGSITYLREYDSAAQKHNLPVMVSVDLLNRLYRTDAPAIVAARAFGLNAFNSLGPVKNFLMNYLSAHR</sequence>
<comment type="function">
    <text evidence="1">FAD-dependent monooxygenase required for two non-consecutive steps during ubiquinone biosynthesis. Required for the C5-ring hydroxylation during ubiquinone biosynthesis by catalyzing the hydroxylation of 4-hydroxy-3-(all-trans-polyprenyl)benzoic acid to 3,4-dihydroxy-5-(all-trans-polyprenyl)benzoic acid. Also acts downstream of coq4, for the C1-hydroxylation during ubiquinone biosynthesis by catalyzing the hydroxylation of 2-methoxy-6-(all-trans-polyprenyl)phenol to 2-methoxy-6-(all-trans-polyprenyl)benzene-1,4-diol. The electrons required for the hydroxylation reaction are funneled indirectly to coq-6 from NADPH via a ferredoxin/ferredoxin reductase system.</text>
</comment>
<comment type="catalytic activity">
    <reaction evidence="1">
        <text>a 4-hydroxy-3-(all-trans-polyprenyl)benzoate + 2 reduced [2Fe-2S]-[ferredoxin] + O2 + 2 H(+) = a 3,4-dihydroxy-5-(all-trans-polyprenyl)benzoate + 2 oxidized [2Fe-2S]-[ferredoxin] + H2O</text>
        <dbReference type="Rhea" id="RHEA:81195"/>
        <dbReference type="Rhea" id="RHEA-COMP:9514"/>
        <dbReference type="Rhea" id="RHEA-COMP:10000"/>
        <dbReference type="Rhea" id="RHEA-COMP:10001"/>
        <dbReference type="Rhea" id="RHEA-COMP:10930"/>
        <dbReference type="ChEBI" id="CHEBI:15377"/>
        <dbReference type="ChEBI" id="CHEBI:15378"/>
        <dbReference type="ChEBI" id="CHEBI:15379"/>
        <dbReference type="ChEBI" id="CHEBI:33737"/>
        <dbReference type="ChEBI" id="CHEBI:33738"/>
        <dbReference type="ChEBI" id="CHEBI:64694"/>
        <dbReference type="ChEBI" id="CHEBI:78396"/>
        <dbReference type="EC" id="1.14.15.45"/>
    </reaction>
</comment>
<comment type="catalytic activity">
    <reaction evidence="1">
        <text>a 2-methoxy-6-(all-trans-polyprenyl)phenol + 2 reduced [2Fe-2S]-[ferredoxin] + O2 + 2 H(+) = a 2-methoxy-6-(all-trans-polyprenyl)benzene-1,4-diol + 2 oxidized [2Fe-2S]-[ferredoxin] + H2O</text>
        <dbReference type="Rhea" id="RHEA:81183"/>
        <dbReference type="Rhea" id="RHEA-COMP:9551"/>
        <dbReference type="Rhea" id="RHEA-COMP:10000"/>
        <dbReference type="Rhea" id="RHEA-COMP:10001"/>
        <dbReference type="Rhea" id="RHEA-COMP:10858"/>
        <dbReference type="ChEBI" id="CHEBI:15377"/>
        <dbReference type="ChEBI" id="CHEBI:15378"/>
        <dbReference type="ChEBI" id="CHEBI:15379"/>
        <dbReference type="ChEBI" id="CHEBI:33737"/>
        <dbReference type="ChEBI" id="CHEBI:33738"/>
        <dbReference type="ChEBI" id="CHEBI:62731"/>
        <dbReference type="ChEBI" id="CHEBI:84166"/>
        <dbReference type="EC" id="1.14.15.46"/>
    </reaction>
</comment>
<comment type="cofactor">
    <cofactor evidence="1">
        <name>FAD</name>
        <dbReference type="ChEBI" id="CHEBI:57692"/>
    </cofactor>
</comment>
<comment type="pathway">
    <text evidence="1">Cofactor biosynthesis; ubiquinone biosynthesis.</text>
</comment>
<comment type="subunit">
    <text evidence="1">Component of a multi-subunit COQ enzyme complex.</text>
</comment>
<comment type="subcellular location">
    <subcellularLocation>
        <location evidence="1">Mitochondrion inner membrane</location>
        <topology evidence="1">Peripheral membrane protein</topology>
        <orientation evidence="1">Matrix side</orientation>
    </subcellularLocation>
</comment>
<comment type="miscellaneous">
    <text evidence="1">This protein may be expected to contain an N-terminal transit peptide but none has been predicted.</text>
</comment>
<comment type="similarity">
    <text evidence="1">Belongs to the UbiH/COQ6 family.</text>
</comment>
<evidence type="ECO:0000255" key="1">
    <source>
        <dbReference type="HAMAP-Rule" id="MF_03193"/>
    </source>
</evidence>
<reference key="1">
    <citation type="journal article" date="1998" name="Science">
        <title>Genome sequence of the nematode C. elegans: a platform for investigating biology.</title>
        <authorList>
            <consortium name="The C. elegans sequencing consortium"/>
        </authorList>
    </citation>
    <scope>NUCLEOTIDE SEQUENCE [LARGE SCALE GENOMIC DNA]</scope>
    <source>
        <strain>Bristol N2</strain>
    </source>
</reference>
<dbReference type="EC" id="1.14.15.45" evidence="1"/>
<dbReference type="EC" id="1.14.15.46" evidence="1"/>
<dbReference type="EMBL" id="FO081028">
    <property type="protein sequence ID" value="CCD68612.1"/>
    <property type="molecule type" value="Genomic_DNA"/>
</dbReference>
<dbReference type="PIR" id="T15254">
    <property type="entry name" value="T15254"/>
</dbReference>
<dbReference type="RefSeq" id="NP_505415.2">
    <property type="nucleotide sequence ID" value="NM_073014.4"/>
</dbReference>
<dbReference type="SMR" id="O01884"/>
<dbReference type="BioGRID" id="44354">
    <property type="interactions" value="2"/>
</dbReference>
<dbReference type="FunCoup" id="O01884">
    <property type="interactions" value="2247"/>
</dbReference>
<dbReference type="STRING" id="6239.K07B1.2.1"/>
<dbReference type="PaxDb" id="6239-K07B1.2"/>
<dbReference type="PeptideAtlas" id="O01884"/>
<dbReference type="EnsemblMetazoa" id="K07B1.2.1">
    <property type="protein sequence ID" value="K07B1.2.1"/>
    <property type="gene ID" value="WBGene00000766"/>
</dbReference>
<dbReference type="GeneID" id="179316"/>
<dbReference type="KEGG" id="cel:CELE_K07B1.2"/>
<dbReference type="UCSC" id="K07B1.2">
    <property type="organism name" value="c. elegans"/>
</dbReference>
<dbReference type="AGR" id="WB:WBGene00000766"/>
<dbReference type="CTD" id="179316"/>
<dbReference type="WormBase" id="K07B1.2">
    <property type="protein sequence ID" value="CE30815"/>
    <property type="gene ID" value="WBGene00000766"/>
    <property type="gene designation" value="coq-6"/>
</dbReference>
<dbReference type="eggNOG" id="KOG3855">
    <property type="taxonomic scope" value="Eukaryota"/>
</dbReference>
<dbReference type="GeneTree" id="ENSGT00390000015152"/>
<dbReference type="HOGENOM" id="CLU_009665_8_0_1"/>
<dbReference type="InParanoid" id="O01884"/>
<dbReference type="OMA" id="VKQMQVW"/>
<dbReference type="OrthoDB" id="683240at2759"/>
<dbReference type="PhylomeDB" id="O01884"/>
<dbReference type="Reactome" id="R-CEL-2142789">
    <property type="pathway name" value="Ubiquinol biosynthesis"/>
</dbReference>
<dbReference type="UniPathway" id="UPA00232"/>
<dbReference type="PRO" id="PR:O01884"/>
<dbReference type="Proteomes" id="UP000001940">
    <property type="component" value="Chromosome V"/>
</dbReference>
<dbReference type="Bgee" id="WBGene00000766">
    <property type="expression patterns" value="Expressed in germ line (C elegans) and 4 other cell types or tissues"/>
</dbReference>
<dbReference type="GO" id="GO:0031314">
    <property type="term" value="C:extrinsic component of mitochondrial inner membrane"/>
    <property type="evidence" value="ECO:0007669"/>
    <property type="project" value="UniProtKB-UniRule"/>
</dbReference>
<dbReference type="GO" id="GO:0005739">
    <property type="term" value="C:mitochondrion"/>
    <property type="evidence" value="ECO:0000318"/>
    <property type="project" value="GO_Central"/>
</dbReference>
<dbReference type="GO" id="GO:0120538">
    <property type="term" value="F:2-methoxy-6-polyprenolphenol 4-hydroxylase activity"/>
    <property type="evidence" value="ECO:0007669"/>
    <property type="project" value="RHEA"/>
</dbReference>
<dbReference type="GO" id="GO:0106364">
    <property type="term" value="F:4-hydroxy-3-all-trans-polyprenylbenzoate oxygenase activity"/>
    <property type="evidence" value="ECO:0007669"/>
    <property type="project" value="InterPro"/>
</dbReference>
<dbReference type="GO" id="GO:0071949">
    <property type="term" value="F:FAD binding"/>
    <property type="evidence" value="ECO:0007669"/>
    <property type="project" value="InterPro"/>
</dbReference>
<dbReference type="GO" id="GO:0016491">
    <property type="term" value="F:oxidoreductase activity"/>
    <property type="evidence" value="ECO:0000318"/>
    <property type="project" value="GO_Central"/>
</dbReference>
<dbReference type="GO" id="GO:0016712">
    <property type="term" value="F:oxidoreductase activity, acting on paired donors, with incorporation or reduction of molecular oxygen, reduced flavin or flavoprotein as one donor, and incorporation of one atom of oxygen"/>
    <property type="evidence" value="ECO:0007669"/>
    <property type="project" value="UniProtKB-UniRule"/>
</dbReference>
<dbReference type="GO" id="GO:0006744">
    <property type="term" value="P:ubiquinone biosynthetic process"/>
    <property type="evidence" value="ECO:0000315"/>
    <property type="project" value="WormBase"/>
</dbReference>
<dbReference type="FunFam" id="3.50.50.60:FF:000458">
    <property type="entry name" value="Ubiquinone biosynthesis monooxygenase COQ6, mitochondrial"/>
    <property type="match status" value="1"/>
</dbReference>
<dbReference type="FunFam" id="3.50.50.60:FF:000529">
    <property type="entry name" value="Ubiquinone biosynthesis monooxygenase COQ6, mitochondrial"/>
    <property type="match status" value="1"/>
</dbReference>
<dbReference type="Gene3D" id="3.50.50.60">
    <property type="entry name" value="FAD/NAD(P)-binding domain"/>
    <property type="match status" value="2"/>
</dbReference>
<dbReference type="HAMAP" id="MF_03193">
    <property type="entry name" value="COQ6_monooxygenase"/>
    <property type="match status" value="1"/>
</dbReference>
<dbReference type="InterPro" id="IPR002938">
    <property type="entry name" value="FAD-bd"/>
</dbReference>
<dbReference type="InterPro" id="IPR036188">
    <property type="entry name" value="FAD/NAD-bd_sf"/>
</dbReference>
<dbReference type="InterPro" id="IPR018168">
    <property type="entry name" value="Ubi_Hdrlase_CS"/>
</dbReference>
<dbReference type="InterPro" id="IPR010971">
    <property type="entry name" value="UbiH/COQ6"/>
</dbReference>
<dbReference type="InterPro" id="IPR051205">
    <property type="entry name" value="UbiH/COQ6_monooxygenase"/>
</dbReference>
<dbReference type="InterPro" id="IPR000689">
    <property type="entry name" value="UbQ_mOase_COQ6"/>
</dbReference>
<dbReference type="NCBIfam" id="TIGR01989">
    <property type="entry name" value="COQ6"/>
    <property type="match status" value="1"/>
</dbReference>
<dbReference type="NCBIfam" id="TIGR01988">
    <property type="entry name" value="Ubi-OHases"/>
    <property type="match status" value="1"/>
</dbReference>
<dbReference type="PANTHER" id="PTHR43876">
    <property type="entry name" value="UBIQUINONE BIOSYNTHESIS MONOOXYGENASE COQ6, MITOCHONDRIAL"/>
    <property type="match status" value="1"/>
</dbReference>
<dbReference type="PANTHER" id="PTHR43876:SF7">
    <property type="entry name" value="UBIQUINONE BIOSYNTHESIS MONOOXYGENASE COQ6, MITOCHONDRIAL"/>
    <property type="match status" value="1"/>
</dbReference>
<dbReference type="Pfam" id="PF01494">
    <property type="entry name" value="FAD_binding_3"/>
    <property type="match status" value="1"/>
</dbReference>
<dbReference type="PRINTS" id="PR00420">
    <property type="entry name" value="RNGMNOXGNASE"/>
</dbReference>
<dbReference type="SUPFAM" id="SSF51905">
    <property type="entry name" value="FAD/NAD(P)-binding domain"/>
    <property type="match status" value="1"/>
</dbReference>
<dbReference type="PROSITE" id="PS01304">
    <property type="entry name" value="UBIH"/>
    <property type="match status" value="1"/>
</dbReference>
<protein>
    <recommendedName>
        <fullName evidence="1">Ubiquinone biosynthesis monooxygenase COQ6, mitochondrial</fullName>
        <ecNumber evidence="1">1.14.15.45</ecNumber>
    </recommendedName>
    <alternativeName>
        <fullName evidence="1">2-methoxy-6-polyprenolphenol 4-hydroxylase</fullName>
        <ecNumber evidence="1">1.14.15.46</ecNumber>
    </alternativeName>
</protein>
<name>COQ6_CAEEL</name>
<feature type="chain" id="PRO_0000207585" description="Ubiquinone biosynthesis monooxygenase COQ6, mitochondrial">
    <location>
        <begin position="1"/>
        <end position="451"/>
    </location>
</feature>